<sequence length="448" mass="49958">MSKKVFIKTFGCQMNEYDSDKMADVLGAAQGYEPTDDPEQADLILFNTCSVREKAQEKVFSDLGRVKHLKDKGVLIGVGGCVASQEGEEIIKRAPFVDVVFGPQTLHRLPELLNARAAKARPQVDISFPEIEKFDHLPPARVEGASAFVSIMEGCSKYCSYCVVPYTRGEEVSRPFEDVLVEVAGLADQGVKEVTLLGQNVNAYLGAMGDTAEKADFALLLEYVAEIPGIERIRFTTSHPNEFTPRLIEAYAKIPKLVSHLHLPVQHGSDRILMAMKRGYTAMEYKSTIRKLRAIRPDMAMSSDFIVGFPGETEEDFQKMMKLIDDVRFDNSFSFIFSPRPGTPAANLHDDTPHEVKLRRLQELQAVINRNILEISQERVGTVQRLLVEGVSKRDGSELMGRTECNRVVNFPGHERLIGQMIDVKITEARTYTLRGEVVMGEVTTAVG</sequence>
<protein>
    <recommendedName>
        <fullName evidence="1">tRNA-2-methylthio-N(6)-dimethylallyladenosine synthase</fullName>
        <ecNumber evidence="1">2.8.4.3</ecNumber>
    </recommendedName>
    <alternativeName>
        <fullName evidence="1">(Dimethylallyl)adenosine tRNA methylthiotransferase MiaB</fullName>
    </alternativeName>
    <alternativeName>
        <fullName evidence="1">tRNA-i(6)A37 methylthiotransferase</fullName>
    </alternativeName>
</protein>
<dbReference type="EC" id="2.8.4.3" evidence="1"/>
<dbReference type="EMBL" id="CP000539">
    <property type="protein sequence ID" value="ABM43737.1"/>
    <property type="molecule type" value="Genomic_DNA"/>
</dbReference>
<dbReference type="SMR" id="A1WBW2"/>
<dbReference type="STRING" id="232721.Ajs_3625"/>
<dbReference type="KEGG" id="ajs:Ajs_3625"/>
<dbReference type="eggNOG" id="COG0621">
    <property type="taxonomic scope" value="Bacteria"/>
</dbReference>
<dbReference type="HOGENOM" id="CLU_018697_2_0_4"/>
<dbReference type="Proteomes" id="UP000000645">
    <property type="component" value="Chromosome"/>
</dbReference>
<dbReference type="GO" id="GO:0005829">
    <property type="term" value="C:cytosol"/>
    <property type="evidence" value="ECO:0007669"/>
    <property type="project" value="TreeGrafter"/>
</dbReference>
<dbReference type="GO" id="GO:0051539">
    <property type="term" value="F:4 iron, 4 sulfur cluster binding"/>
    <property type="evidence" value="ECO:0007669"/>
    <property type="project" value="UniProtKB-UniRule"/>
</dbReference>
<dbReference type="GO" id="GO:0046872">
    <property type="term" value="F:metal ion binding"/>
    <property type="evidence" value="ECO:0007669"/>
    <property type="project" value="UniProtKB-KW"/>
</dbReference>
<dbReference type="GO" id="GO:0035597">
    <property type="term" value="F:N6-isopentenyladenosine methylthiotransferase activity"/>
    <property type="evidence" value="ECO:0007669"/>
    <property type="project" value="TreeGrafter"/>
</dbReference>
<dbReference type="CDD" id="cd01335">
    <property type="entry name" value="Radical_SAM"/>
    <property type="match status" value="1"/>
</dbReference>
<dbReference type="FunFam" id="3.40.50.12160:FF:000001">
    <property type="entry name" value="tRNA-2-methylthio-N(6)-dimethylallyladenosine synthase"/>
    <property type="match status" value="1"/>
</dbReference>
<dbReference type="FunFam" id="3.80.30.20:FF:000001">
    <property type="entry name" value="tRNA-2-methylthio-N(6)-dimethylallyladenosine synthase 2"/>
    <property type="match status" value="1"/>
</dbReference>
<dbReference type="Gene3D" id="3.40.50.12160">
    <property type="entry name" value="Methylthiotransferase, N-terminal domain"/>
    <property type="match status" value="1"/>
</dbReference>
<dbReference type="Gene3D" id="3.80.30.20">
    <property type="entry name" value="tm_1862 like domain"/>
    <property type="match status" value="1"/>
</dbReference>
<dbReference type="HAMAP" id="MF_01864">
    <property type="entry name" value="tRNA_metthiotr_MiaB"/>
    <property type="match status" value="1"/>
</dbReference>
<dbReference type="InterPro" id="IPR006638">
    <property type="entry name" value="Elp3/MiaA/NifB-like_rSAM"/>
</dbReference>
<dbReference type="InterPro" id="IPR005839">
    <property type="entry name" value="Methylthiotransferase"/>
</dbReference>
<dbReference type="InterPro" id="IPR020612">
    <property type="entry name" value="Methylthiotransferase_CS"/>
</dbReference>
<dbReference type="InterPro" id="IPR013848">
    <property type="entry name" value="Methylthiotransferase_N"/>
</dbReference>
<dbReference type="InterPro" id="IPR038135">
    <property type="entry name" value="Methylthiotransferase_N_sf"/>
</dbReference>
<dbReference type="InterPro" id="IPR006463">
    <property type="entry name" value="MiaB_methiolase"/>
</dbReference>
<dbReference type="InterPro" id="IPR007197">
    <property type="entry name" value="rSAM"/>
</dbReference>
<dbReference type="InterPro" id="IPR023404">
    <property type="entry name" value="rSAM_horseshoe"/>
</dbReference>
<dbReference type="InterPro" id="IPR002792">
    <property type="entry name" value="TRAM_dom"/>
</dbReference>
<dbReference type="NCBIfam" id="TIGR01574">
    <property type="entry name" value="miaB-methiolase"/>
    <property type="match status" value="1"/>
</dbReference>
<dbReference type="NCBIfam" id="TIGR00089">
    <property type="entry name" value="MiaB/RimO family radical SAM methylthiotransferase"/>
    <property type="match status" value="1"/>
</dbReference>
<dbReference type="PANTHER" id="PTHR43020">
    <property type="entry name" value="CDK5 REGULATORY SUBUNIT-ASSOCIATED PROTEIN 1"/>
    <property type="match status" value="1"/>
</dbReference>
<dbReference type="PANTHER" id="PTHR43020:SF2">
    <property type="entry name" value="MITOCHONDRIAL TRNA METHYLTHIOTRANSFERASE CDK5RAP1"/>
    <property type="match status" value="1"/>
</dbReference>
<dbReference type="Pfam" id="PF04055">
    <property type="entry name" value="Radical_SAM"/>
    <property type="match status" value="1"/>
</dbReference>
<dbReference type="Pfam" id="PF01938">
    <property type="entry name" value="TRAM"/>
    <property type="match status" value="1"/>
</dbReference>
<dbReference type="Pfam" id="PF00919">
    <property type="entry name" value="UPF0004"/>
    <property type="match status" value="1"/>
</dbReference>
<dbReference type="SFLD" id="SFLDF00273">
    <property type="entry name" value="(dimethylallyl)adenosine_tRNA"/>
    <property type="match status" value="1"/>
</dbReference>
<dbReference type="SFLD" id="SFLDG01082">
    <property type="entry name" value="B12-binding_domain_containing"/>
    <property type="match status" value="1"/>
</dbReference>
<dbReference type="SFLD" id="SFLDS00029">
    <property type="entry name" value="Radical_SAM"/>
    <property type="match status" value="1"/>
</dbReference>
<dbReference type="SMART" id="SM00729">
    <property type="entry name" value="Elp3"/>
    <property type="match status" value="1"/>
</dbReference>
<dbReference type="SUPFAM" id="SSF102114">
    <property type="entry name" value="Radical SAM enzymes"/>
    <property type="match status" value="1"/>
</dbReference>
<dbReference type="PROSITE" id="PS51449">
    <property type="entry name" value="MTTASE_N"/>
    <property type="match status" value="1"/>
</dbReference>
<dbReference type="PROSITE" id="PS01278">
    <property type="entry name" value="MTTASE_RADICAL"/>
    <property type="match status" value="1"/>
</dbReference>
<dbReference type="PROSITE" id="PS51918">
    <property type="entry name" value="RADICAL_SAM"/>
    <property type="match status" value="1"/>
</dbReference>
<dbReference type="PROSITE" id="PS50926">
    <property type="entry name" value="TRAM"/>
    <property type="match status" value="1"/>
</dbReference>
<proteinExistence type="inferred from homology"/>
<name>MIAB_ACISJ</name>
<feature type="chain" id="PRO_0000374086" description="tRNA-2-methylthio-N(6)-dimethylallyladenosine synthase">
    <location>
        <begin position="1"/>
        <end position="448"/>
    </location>
</feature>
<feature type="domain" description="MTTase N-terminal" evidence="1">
    <location>
        <begin position="3"/>
        <end position="118"/>
    </location>
</feature>
<feature type="domain" description="Radical SAM core" evidence="2">
    <location>
        <begin position="141"/>
        <end position="374"/>
    </location>
</feature>
<feature type="domain" description="TRAM" evidence="1">
    <location>
        <begin position="377"/>
        <end position="440"/>
    </location>
</feature>
<feature type="binding site" evidence="1">
    <location>
        <position position="12"/>
    </location>
    <ligand>
        <name>[4Fe-4S] cluster</name>
        <dbReference type="ChEBI" id="CHEBI:49883"/>
        <label>1</label>
    </ligand>
</feature>
<feature type="binding site" evidence="1">
    <location>
        <position position="49"/>
    </location>
    <ligand>
        <name>[4Fe-4S] cluster</name>
        <dbReference type="ChEBI" id="CHEBI:49883"/>
        <label>1</label>
    </ligand>
</feature>
<feature type="binding site" evidence="1">
    <location>
        <position position="81"/>
    </location>
    <ligand>
        <name>[4Fe-4S] cluster</name>
        <dbReference type="ChEBI" id="CHEBI:49883"/>
        <label>1</label>
    </ligand>
</feature>
<feature type="binding site" evidence="1">
    <location>
        <position position="155"/>
    </location>
    <ligand>
        <name>[4Fe-4S] cluster</name>
        <dbReference type="ChEBI" id="CHEBI:49883"/>
        <label>2</label>
        <note>4Fe-4S-S-AdoMet</note>
    </ligand>
</feature>
<feature type="binding site" evidence="1">
    <location>
        <position position="159"/>
    </location>
    <ligand>
        <name>[4Fe-4S] cluster</name>
        <dbReference type="ChEBI" id="CHEBI:49883"/>
        <label>2</label>
        <note>4Fe-4S-S-AdoMet</note>
    </ligand>
</feature>
<feature type="binding site" evidence="1">
    <location>
        <position position="162"/>
    </location>
    <ligand>
        <name>[4Fe-4S] cluster</name>
        <dbReference type="ChEBI" id="CHEBI:49883"/>
        <label>2</label>
        <note>4Fe-4S-S-AdoMet</note>
    </ligand>
</feature>
<evidence type="ECO:0000255" key="1">
    <source>
        <dbReference type="HAMAP-Rule" id="MF_01864"/>
    </source>
</evidence>
<evidence type="ECO:0000255" key="2">
    <source>
        <dbReference type="PROSITE-ProRule" id="PRU01266"/>
    </source>
</evidence>
<reference key="1">
    <citation type="submission" date="2006-12" db="EMBL/GenBank/DDBJ databases">
        <title>Complete sequence of chromosome 1 of Acidovorax sp. JS42.</title>
        <authorList>
            <person name="Copeland A."/>
            <person name="Lucas S."/>
            <person name="Lapidus A."/>
            <person name="Barry K."/>
            <person name="Detter J.C."/>
            <person name="Glavina del Rio T."/>
            <person name="Dalin E."/>
            <person name="Tice H."/>
            <person name="Pitluck S."/>
            <person name="Chertkov O."/>
            <person name="Brettin T."/>
            <person name="Bruce D."/>
            <person name="Han C."/>
            <person name="Tapia R."/>
            <person name="Gilna P."/>
            <person name="Schmutz J."/>
            <person name="Larimer F."/>
            <person name="Land M."/>
            <person name="Hauser L."/>
            <person name="Kyrpides N."/>
            <person name="Kim E."/>
            <person name="Stahl D."/>
            <person name="Richardson P."/>
        </authorList>
    </citation>
    <scope>NUCLEOTIDE SEQUENCE [LARGE SCALE GENOMIC DNA]</scope>
    <source>
        <strain>JS42</strain>
    </source>
</reference>
<comment type="function">
    <text evidence="1">Catalyzes the methylthiolation of N6-(dimethylallyl)adenosine (i(6)A), leading to the formation of 2-methylthio-N6-(dimethylallyl)adenosine (ms(2)i(6)A) at position 37 in tRNAs that read codons beginning with uridine.</text>
</comment>
<comment type="catalytic activity">
    <reaction evidence="1">
        <text>N(6)-dimethylallyladenosine(37) in tRNA + (sulfur carrier)-SH + AH2 + 2 S-adenosyl-L-methionine = 2-methylsulfanyl-N(6)-dimethylallyladenosine(37) in tRNA + (sulfur carrier)-H + 5'-deoxyadenosine + L-methionine + A + S-adenosyl-L-homocysteine + 2 H(+)</text>
        <dbReference type="Rhea" id="RHEA:37067"/>
        <dbReference type="Rhea" id="RHEA-COMP:10375"/>
        <dbReference type="Rhea" id="RHEA-COMP:10376"/>
        <dbReference type="Rhea" id="RHEA-COMP:14737"/>
        <dbReference type="Rhea" id="RHEA-COMP:14739"/>
        <dbReference type="ChEBI" id="CHEBI:13193"/>
        <dbReference type="ChEBI" id="CHEBI:15378"/>
        <dbReference type="ChEBI" id="CHEBI:17319"/>
        <dbReference type="ChEBI" id="CHEBI:17499"/>
        <dbReference type="ChEBI" id="CHEBI:29917"/>
        <dbReference type="ChEBI" id="CHEBI:57844"/>
        <dbReference type="ChEBI" id="CHEBI:57856"/>
        <dbReference type="ChEBI" id="CHEBI:59789"/>
        <dbReference type="ChEBI" id="CHEBI:64428"/>
        <dbReference type="ChEBI" id="CHEBI:74415"/>
        <dbReference type="ChEBI" id="CHEBI:74417"/>
        <dbReference type="EC" id="2.8.4.3"/>
    </reaction>
</comment>
<comment type="cofactor">
    <cofactor evidence="1">
        <name>[4Fe-4S] cluster</name>
        <dbReference type="ChEBI" id="CHEBI:49883"/>
    </cofactor>
    <text evidence="1">Binds 2 [4Fe-4S] clusters. One cluster is coordinated with 3 cysteines and an exchangeable S-adenosyl-L-methionine.</text>
</comment>
<comment type="subunit">
    <text evidence="1">Monomer.</text>
</comment>
<comment type="subcellular location">
    <subcellularLocation>
        <location evidence="1">Cytoplasm</location>
    </subcellularLocation>
</comment>
<comment type="similarity">
    <text evidence="1">Belongs to the methylthiotransferase family. MiaB subfamily.</text>
</comment>
<keyword id="KW-0004">4Fe-4S</keyword>
<keyword id="KW-0963">Cytoplasm</keyword>
<keyword id="KW-0408">Iron</keyword>
<keyword id="KW-0411">Iron-sulfur</keyword>
<keyword id="KW-0479">Metal-binding</keyword>
<keyword id="KW-0949">S-adenosyl-L-methionine</keyword>
<keyword id="KW-0808">Transferase</keyword>
<keyword id="KW-0819">tRNA processing</keyword>
<accession>A1WBW2</accession>
<organism>
    <name type="scientific">Acidovorax sp. (strain JS42)</name>
    <dbReference type="NCBI Taxonomy" id="232721"/>
    <lineage>
        <taxon>Bacteria</taxon>
        <taxon>Pseudomonadati</taxon>
        <taxon>Pseudomonadota</taxon>
        <taxon>Betaproteobacteria</taxon>
        <taxon>Burkholderiales</taxon>
        <taxon>Comamonadaceae</taxon>
        <taxon>Acidovorax</taxon>
    </lineage>
</organism>
<gene>
    <name evidence="1" type="primary">miaB</name>
    <name type="ordered locus">Ajs_3625</name>
</gene>